<accession>B1IW93</accession>
<comment type="function">
    <text evidence="1">Site-specific tyrosine recombinase, which acts by catalyzing the cutting and rejoining of the recombining DNA molecules. Binds cooperatively to specific DNA consensus sequences that are separated from XerD binding sites by a short central region, forming the heterotetrameric XerC-XerD complex that recombines DNA substrates. The complex is essential to convert dimers of the bacterial chromosome into monomers to permit their segregation at cell division. It also contributes to the segregational stability of plasmids. In the complex XerC specifically exchanges the top DNA strands.</text>
</comment>
<comment type="activity regulation">
    <text evidence="1">FtsK may regulate the catalytic switch between XerC and XerD in the heterotetrameric complex during the two steps of the recombination process.</text>
</comment>
<comment type="subunit">
    <text evidence="1">Forms a cyclic heterotetrameric complex composed of two molecules of XerC and two molecules of XerD, in which XerC interacts with XerD via its C-terminal region, XerD interacts with XerC via its C-terminal region and so on.</text>
</comment>
<comment type="subcellular location">
    <subcellularLocation>
        <location evidence="1">Cytoplasm</location>
    </subcellularLocation>
</comment>
<comment type="similarity">
    <text evidence="1">Belongs to the 'phage' integrase family. XerC subfamily.</text>
</comment>
<name>XERC_ECOLC</name>
<dbReference type="EMBL" id="CP000946">
    <property type="protein sequence ID" value="ACA79793.1"/>
    <property type="molecule type" value="Genomic_DNA"/>
</dbReference>
<dbReference type="RefSeq" id="WP_000130691.1">
    <property type="nucleotide sequence ID" value="NZ_MTFT01000015.1"/>
</dbReference>
<dbReference type="SMR" id="B1IW93"/>
<dbReference type="GeneID" id="75059707"/>
<dbReference type="KEGG" id="ecl:EcolC_4196"/>
<dbReference type="HOGENOM" id="CLU_027562_9_0_6"/>
<dbReference type="GO" id="GO:0005737">
    <property type="term" value="C:cytoplasm"/>
    <property type="evidence" value="ECO:0007669"/>
    <property type="project" value="UniProtKB-SubCell"/>
</dbReference>
<dbReference type="GO" id="GO:0003677">
    <property type="term" value="F:DNA binding"/>
    <property type="evidence" value="ECO:0007669"/>
    <property type="project" value="UniProtKB-KW"/>
</dbReference>
<dbReference type="GO" id="GO:0009037">
    <property type="term" value="F:tyrosine-based site-specific recombinase activity"/>
    <property type="evidence" value="ECO:0007669"/>
    <property type="project" value="UniProtKB-UniRule"/>
</dbReference>
<dbReference type="GO" id="GO:0051301">
    <property type="term" value="P:cell division"/>
    <property type="evidence" value="ECO:0007669"/>
    <property type="project" value="UniProtKB-KW"/>
</dbReference>
<dbReference type="GO" id="GO:0007059">
    <property type="term" value="P:chromosome segregation"/>
    <property type="evidence" value="ECO:0007669"/>
    <property type="project" value="UniProtKB-UniRule"/>
</dbReference>
<dbReference type="GO" id="GO:0006313">
    <property type="term" value="P:DNA transposition"/>
    <property type="evidence" value="ECO:0007669"/>
    <property type="project" value="UniProtKB-UniRule"/>
</dbReference>
<dbReference type="CDD" id="cd00798">
    <property type="entry name" value="INT_XerDC_C"/>
    <property type="match status" value="1"/>
</dbReference>
<dbReference type="FunFam" id="1.10.443.10:FF:000002">
    <property type="entry name" value="Tyrosine recombinase XerC"/>
    <property type="match status" value="1"/>
</dbReference>
<dbReference type="Gene3D" id="1.10.150.130">
    <property type="match status" value="1"/>
</dbReference>
<dbReference type="Gene3D" id="1.10.443.10">
    <property type="entry name" value="Intergrase catalytic core"/>
    <property type="match status" value="1"/>
</dbReference>
<dbReference type="HAMAP" id="MF_01808">
    <property type="entry name" value="Recomb_XerC_XerD"/>
    <property type="match status" value="1"/>
</dbReference>
<dbReference type="InterPro" id="IPR044068">
    <property type="entry name" value="CB"/>
</dbReference>
<dbReference type="InterPro" id="IPR011010">
    <property type="entry name" value="DNA_brk_join_enz"/>
</dbReference>
<dbReference type="InterPro" id="IPR013762">
    <property type="entry name" value="Integrase-like_cat_sf"/>
</dbReference>
<dbReference type="InterPro" id="IPR002104">
    <property type="entry name" value="Integrase_catalytic"/>
</dbReference>
<dbReference type="InterPro" id="IPR010998">
    <property type="entry name" value="Integrase_recombinase_N"/>
</dbReference>
<dbReference type="InterPro" id="IPR004107">
    <property type="entry name" value="Integrase_SAM-like_N"/>
</dbReference>
<dbReference type="InterPro" id="IPR011931">
    <property type="entry name" value="Recomb_XerC"/>
</dbReference>
<dbReference type="InterPro" id="IPR023009">
    <property type="entry name" value="Tyrosine_recombinase_XerC/XerD"/>
</dbReference>
<dbReference type="InterPro" id="IPR050090">
    <property type="entry name" value="Tyrosine_recombinase_XerCD"/>
</dbReference>
<dbReference type="NCBIfam" id="NF001399">
    <property type="entry name" value="PRK00283.1"/>
    <property type="match status" value="1"/>
</dbReference>
<dbReference type="NCBIfam" id="TIGR02224">
    <property type="entry name" value="recomb_XerC"/>
    <property type="match status" value="1"/>
</dbReference>
<dbReference type="PANTHER" id="PTHR30349">
    <property type="entry name" value="PHAGE INTEGRASE-RELATED"/>
    <property type="match status" value="1"/>
</dbReference>
<dbReference type="PANTHER" id="PTHR30349:SF81">
    <property type="entry name" value="TYROSINE RECOMBINASE XERC"/>
    <property type="match status" value="1"/>
</dbReference>
<dbReference type="Pfam" id="PF02899">
    <property type="entry name" value="Phage_int_SAM_1"/>
    <property type="match status" value="1"/>
</dbReference>
<dbReference type="Pfam" id="PF00589">
    <property type="entry name" value="Phage_integrase"/>
    <property type="match status" value="1"/>
</dbReference>
<dbReference type="SUPFAM" id="SSF56349">
    <property type="entry name" value="DNA breaking-rejoining enzymes"/>
    <property type="match status" value="1"/>
</dbReference>
<dbReference type="SUPFAM" id="SSF47823">
    <property type="entry name" value="lambda integrase-like, N-terminal domain"/>
    <property type="match status" value="1"/>
</dbReference>
<dbReference type="PROSITE" id="PS51900">
    <property type="entry name" value="CB"/>
    <property type="match status" value="1"/>
</dbReference>
<dbReference type="PROSITE" id="PS51898">
    <property type="entry name" value="TYR_RECOMBINASE"/>
    <property type="match status" value="1"/>
</dbReference>
<feature type="chain" id="PRO_1000088237" description="Tyrosine recombinase XerC">
    <location>
        <begin position="1"/>
        <end position="298"/>
    </location>
</feature>
<feature type="domain" description="Core-binding (CB)" evidence="3">
    <location>
        <begin position="2"/>
        <end position="88"/>
    </location>
</feature>
<feature type="domain" description="Tyr recombinase" evidence="2">
    <location>
        <begin position="109"/>
        <end position="288"/>
    </location>
</feature>
<feature type="active site" evidence="1">
    <location>
        <position position="148"/>
    </location>
</feature>
<feature type="active site" evidence="1">
    <location>
        <position position="172"/>
    </location>
</feature>
<feature type="active site" evidence="1">
    <location>
        <position position="240"/>
    </location>
</feature>
<feature type="active site" evidence="1">
    <location>
        <position position="243"/>
    </location>
</feature>
<feature type="active site" evidence="1">
    <location>
        <position position="266"/>
    </location>
</feature>
<feature type="active site" description="O-(3'-phospho-DNA)-tyrosine intermediate" evidence="1">
    <location>
        <position position="275"/>
    </location>
</feature>
<gene>
    <name evidence="1" type="primary">xerC</name>
    <name type="ordered locus">EcolC_4196</name>
</gene>
<evidence type="ECO:0000255" key="1">
    <source>
        <dbReference type="HAMAP-Rule" id="MF_01808"/>
    </source>
</evidence>
<evidence type="ECO:0000255" key="2">
    <source>
        <dbReference type="PROSITE-ProRule" id="PRU01246"/>
    </source>
</evidence>
<evidence type="ECO:0000255" key="3">
    <source>
        <dbReference type="PROSITE-ProRule" id="PRU01248"/>
    </source>
</evidence>
<sequence length="298" mass="33868">MTDLHTDVERYLRYLSVERQLSPITLLNYQRQLEAIINFASENGLQSWQQCDVTMVRNFAVRSRRKGLGAASLALRLSALRSFFDWLVSQNELKANPAKGVSAPKAPRHLPKNIDVDDMNRLLDIDINDPLAVRDRAMLEVMYGAGLRLSELVGLDIKHLDLESGEVWVMGKGSKERRLPIGRNAVAWIEHWLDLRDLFGSEDDALFLSKLGKRISARNVQKRFAEWGIKQGLNNHVHPHKLRHSFATHMLESSGDLRGVQELLGHANLSTTQIYTHLDFQHLASVYDAAHPRAKRGK</sequence>
<protein>
    <recommendedName>
        <fullName evidence="1">Tyrosine recombinase XerC</fullName>
    </recommendedName>
</protein>
<organism>
    <name type="scientific">Escherichia coli (strain ATCC 8739 / DSM 1576 / NBRC 3972 / NCIMB 8545 / WDCM 00012 / Crooks)</name>
    <dbReference type="NCBI Taxonomy" id="481805"/>
    <lineage>
        <taxon>Bacteria</taxon>
        <taxon>Pseudomonadati</taxon>
        <taxon>Pseudomonadota</taxon>
        <taxon>Gammaproteobacteria</taxon>
        <taxon>Enterobacterales</taxon>
        <taxon>Enterobacteriaceae</taxon>
        <taxon>Escherichia</taxon>
    </lineage>
</organism>
<proteinExistence type="inferred from homology"/>
<keyword id="KW-0131">Cell cycle</keyword>
<keyword id="KW-0132">Cell division</keyword>
<keyword id="KW-0159">Chromosome partition</keyword>
<keyword id="KW-0963">Cytoplasm</keyword>
<keyword id="KW-0229">DNA integration</keyword>
<keyword id="KW-0233">DNA recombination</keyword>
<keyword id="KW-0238">DNA-binding</keyword>
<reference key="1">
    <citation type="submission" date="2008-02" db="EMBL/GenBank/DDBJ databases">
        <title>Complete sequence of Escherichia coli C str. ATCC 8739.</title>
        <authorList>
            <person name="Copeland A."/>
            <person name="Lucas S."/>
            <person name="Lapidus A."/>
            <person name="Glavina del Rio T."/>
            <person name="Dalin E."/>
            <person name="Tice H."/>
            <person name="Bruce D."/>
            <person name="Goodwin L."/>
            <person name="Pitluck S."/>
            <person name="Kiss H."/>
            <person name="Brettin T."/>
            <person name="Detter J.C."/>
            <person name="Han C."/>
            <person name="Kuske C.R."/>
            <person name="Schmutz J."/>
            <person name="Larimer F."/>
            <person name="Land M."/>
            <person name="Hauser L."/>
            <person name="Kyrpides N."/>
            <person name="Mikhailova N."/>
            <person name="Ingram L."/>
            <person name="Richardson P."/>
        </authorList>
    </citation>
    <scope>NUCLEOTIDE SEQUENCE [LARGE SCALE GENOMIC DNA]</scope>
    <source>
        <strain>ATCC 8739 / DSM 1576 / NBRC 3972 / NCIMB 8545 / WDCM 00012 / Crooks</strain>
    </source>
</reference>